<dbReference type="EC" id="4.4.1.5"/>
<dbReference type="UniPathway" id="UPA00619">
    <property type="reaction ID" value="UER00675"/>
</dbReference>
<dbReference type="GO" id="GO:0004462">
    <property type="term" value="F:lactoylglutathione lyase activity"/>
    <property type="evidence" value="ECO:0007669"/>
    <property type="project" value="UniProtKB-EC"/>
</dbReference>
<dbReference type="GO" id="GO:0046872">
    <property type="term" value="F:metal ion binding"/>
    <property type="evidence" value="ECO:0007669"/>
    <property type="project" value="UniProtKB-KW"/>
</dbReference>
<comment type="function">
    <text evidence="2">Catalyzes the conversion of hemimercaptal, formed from methylglyoxal and glutathione, to S-lactoylglutathione.</text>
</comment>
<comment type="catalytic activity">
    <reaction evidence="2">
        <text>(R)-S-lactoylglutathione = methylglyoxal + glutathione</text>
        <dbReference type="Rhea" id="RHEA:19069"/>
        <dbReference type="ChEBI" id="CHEBI:17158"/>
        <dbReference type="ChEBI" id="CHEBI:57474"/>
        <dbReference type="ChEBI" id="CHEBI:57925"/>
        <dbReference type="EC" id="4.4.1.5"/>
    </reaction>
</comment>
<comment type="cofactor">
    <cofactor evidence="2">
        <name>Zn(2+)</name>
        <dbReference type="ChEBI" id="CHEBI:29105"/>
    </cofactor>
    <text evidence="2">Binds 1 zinc ion per subunit.</text>
</comment>
<comment type="pathway">
    <text>Secondary metabolite metabolism; methylglyoxal degradation; (R)-lactate from methylglyoxal: step 1/2.</text>
</comment>
<comment type="miscellaneous">
    <text evidence="5">On the 2D-gel the determined pI of this protein is: 5.7, its MW is: 35.1 kDa.</text>
</comment>
<comment type="similarity">
    <text evidence="3">Belongs to the glyoxalase I family.</text>
</comment>
<comment type="caution">
    <text evidence="5">The order of the peptides shown is unknown.</text>
</comment>
<sequence>ITACLDPDGWKEPGPLPGISTK</sequence>
<feature type="chain" id="PRO_0000240626" description="Putative lactoylglutathione lyase">
    <location>
        <begin position="1" status="less than"/>
        <end position="22" status="greater than"/>
    </location>
</feature>
<feature type="region of interest" description="Disordered" evidence="4">
    <location>
        <begin position="1"/>
        <end position="22"/>
    </location>
</feature>
<feature type="active site" description="Proton donor/acceptor" evidence="1">
    <location>
        <position position="12"/>
    </location>
</feature>
<feature type="non-consecutive residues" evidence="6">
    <location>
        <begin position="11"/>
        <end position="12"/>
    </location>
</feature>
<feature type="non-terminal residue" evidence="6">
    <location>
        <position position="1"/>
    </location>
</feature>
<feature type="non-terminal residue" evidence="6">
    <location>
        <position position="22"/>
    </location>
</feature>
<protein>
    <recommendedName>
        <fullName>Putative lactoylglutathione lyase</fullName>
        <ecNumber>4.4.1.5</ecNumber>
    </recommendedName>
    <alternativeName>
        <fullName>Aldoketomutase</fullName>
    </alternativeName>
    <alternativeName>
        <fullName>Glyoxalase I</fullName>
        <shortName>Glx I</shortName>
    </alternativeName>
    <alternativeName>
        <fullName>Ketone-aldehyde mutase</fullName>
    </alternativeName>
    <alternativeName>
        <fullName>Methylglyoxalase</fullName>
    </alternativeName>
    <alternativeName>
        <fullName>PS3</fullName>
    </alternativeName>
    <alternativeName>
        <fullName>S-D-lactoylglutathione methylglyoxal lyase</fullName>
    </alternativeName>
</protein>
<keyword id="KW-0903">Direct protein sequencing</keyword>
<keyword id="KW-0456">Lyase</keyword>
<keyword id="KW-0479">Metal-binding</keyword>
<keyword id="KW-0862">Zinc</keyword>
<name>LGUL_PINST</name>
<accession>P84719</accession>
<organism>
    <name type="scientific">Pinus strobus</name>
    <name type="common">Eastern white pine</name>
    <dbReference type="NCBI Taxonomy" id="3348"/>
    <lineage>
        <taxon>Eukaryota</taxon>
        <taxon>Viridiplantae</taxon>
        <taxon>Streptophyta</taxon>
        <taxon>Embryophyta</taxon>
        <taxon>Tracheophyta</taxon>
        <taxon>Spermatophyta</taxon>
        <taxon>Pinopsida</taxon>
        <taxon>Pinidae</taxon>
        <taxon>Conifers I</taxon>
        <taxon>Pinales</taxon>
        <taxon>Pinaceae</taxon>
        <taxon>Pinus</taxon>
        <taxon>Pinus subgen. Strobus</taxon>
    </lineage>
</organism>
<evidence type="ECO:0000250" key="1"/>
<evidence type="ECO:0000250" key="2">
    <source>
        <dbReference type="UniProtKB" id="Q09751"/>
    </source>
</evidence>
<evidence type="ECO:0000255" key="3"/>
<evidence type="ECO:0000256" key="4">
    <source>
        <dbReference type="SAM" id="MobiDB-lite"/>
    </source>
</evidence>
<evidence type="ECO:0000269" key="5">
    <source>
    </source>
</evidence>
<evidence type="ECO:0000303" key="6">
    <source>
    </source>
</evidence>
<evidence type="ECO:0000305" key="7"/>
<proteinExistence type="evidence at protein level"/>
<reference evidence="7" key="1">
    <citation type="journal article" date="2006" name="Mol. Plant Microbe Interact.">
        <title>Proteomic comparison of needles from blister rust-resistant and susceptible Pinus strobus seedlings reveals upregulation of putative disease resistance proteins.</title>
        <authorList>
            <person name="Smith J.A."/>
            <person name="Blanchette R.A."/>
            <person name="Burnes T.A."/>
            <person name="Jacobs J.J."/>
            <person name="Higgins L."/>
            <person name="Witthuhn B.A."/>
            <person name="David A.J."/>
            <person name="Gillman J.H."/>
        </authorList>
    </citation>
    <scope>PROTEIN SEQUENCE</scope>
    <source>
        <tissue evidence="5">Leaf</tissue>
    </source>
</reference>